<keyword id="KW-0067">ATP-binding</keyword>
<keyword id="KW-0547">Nucleotide-binding</keyword>
<keyword id="KW-1185">Reference proteome</keyword>
<reference key="1">
    <citation type="journal article" date="1996" name="Science">
        <title>Complete genome sequence of the methanogenic archaeon, Methanococcus jannaschii.</title>
        <authorList>
            <person name="Bult C.J."/>
            <person name="White O."/>
            <person name="Olsen G.J."/>
            <person name="Zhou L."/>
            <person name="Fleischmann R.D."/>
            <person name="Sutton G.G."/>
            <person name="Blake J.A."/>
            <person name="FitzGerald L.M."/>
            <person name="Clayton R.A."/>
            <person name="Gocayne J.D."/>
            <person name="Kerlavage A.R."/>
            <person name="Dougherty B.A."/>
            <person name="Tomb J.-F."/>
            <person name="Adams M.D."/>
            <person name="Reich C.I."/>
            <person name="Overbeek R."/>
            <person name="Kirkness E.F."/>
            <person name="Weinstock K.G."/>
            <person name="Merrick J.M."/>
            <person name="Glodek A."/>
            <person name="Scott J.L."/>
            <person name="Geoghagen N.S.M."/>
            <person name="Weidman J.F."/>
            <person name="Fuhrmann J.L."/>
            <person name="Nguyen D."/>
            <person name="Utterback T.R."/>
            <person name="Kelley J.M."/>
            <person name="Peterson J.D."/>
            <person name="Sadow P.W."/>
            <person name="Hanna M.C."/>
            <person name="Cotton M.D."/>
            <person name="Roberts K.M."/>
            <person name="Hurst M.A."/>
            <person name="Kaine B.P."/>
            <person name="Borodovsky M."/>
            <person name="Klenk H.-P."/>
            <person name="Fraser C.M."/>
            <person name="Smith H.O."/>
            <person name="Woese C.R."/>
            <person name="Venter J.C."/>
        </authorList>
    </citation>
    <scope>NUCLEOTIDE SEQUENCE [LARGE SCALE GENOMIC DNA]</scope>
    <source>
        <strain>ATCC 43067 / DSM 2661 / JAL-1 / JCM 10045 / NBRC 100440</strain>
    </source>
</reference>
<proteinExistence type="predicted"/>
<sequence length="59" mass="7209">MYGIVMFVNRKEELEFLERKWNENKANLIILYGRRRVGKTMLIKKFLENKKIKRASIFC</sequence>
<accession>Q57866</accession>
<name>Y423_METJA</name>
<evidence type="ECO:0000255" key="1"/>
<gene>
    <name type="ordered locus">MJ0423</name>
</gene>
<organism>
    <name type="scientific">Methanocaldococcus jannaschii (strain ATCC 43067 / DSM 2661 / JAL-1 / JCM 10045 / NBRC 100440)</name>
    <name type="common">Methanococcus jannaschii</name>
    <dbReference type="NCBI Taxonomy" id="243232"/>
    <lineage>
        <taxon>Archaea</taxon>
        <taxon>Methanobacteriati</taxon>
        <taxon>Methanobacteriota</taxon>
        <taxon>Methanomada group</taxon>
        <taxon>Methanococci</taxon>
        <taxon>Methanococcales</taxon>
        <taxon>Methanocaldococcaceae</taxon>
        <taxon>Methanocaldococcus</taxon>
    </lineage>
</organism>
<feature type="chain" id="PRO_0000106868" description="Uncharacterized ATP-binding protein MJ0423">
    <location>
        <begin position="1"/>
        <end position="59"/>
    </location>
</feature>
<feature type="binding site" evidence="1">
    <location>
        <begin position="33"/>
        <end position="40"/>
    </location>
    <ligand>
        <name>ATP</name>
        <dbReference type="ChEBI" id="CHEBI:30616"/>
    </ligand>
</feature>
<protein>
    <recommendedName>
        <fullName>Uncharacterized ATP-binding protein MJ0423</fullName>
    </recommendedName>
</protein>
<dbReference type="EMBL" id="L77117">
    <property type="protein sequence ID" value="AAB98411.1"/>
    <property type="molecule type" value="Genomic_DNA"/>
</dbReference>
<dbReference type="PIR" id="G64352">
    <property type="entry name" value="G64352"/>
</dbReference>
<dbReference type="STRING" id="243232.MJ_0423"/>
<dbReference type="PaxDb" id="243232-MJ_0423"/>
<dbReference type="EnsemblBacteria" id="AAB98411">
    <property type="protein sequence ID" value="AAB98411"/>
    <property type="gene ID" value="MJ_0423"/>
</dbReference>
<dbReference type="KEGG" id="mja:MJ_0423"/>
<dbReference type="eggNOG" id="arCOG03166">
    <property type="taxonomic scope" value="Archaea"/>
</dbReference>
<dbReference type="HOGENOM" id="CLU_210066_0_0_2"/>
<dbReference type="InParanoid" id="Q57866"/>
<dbReference type="OrthoDB" id="132045at2157"/>
<dbReference type="Proteomes" id="UP000000805">
    <property type="component" value="Chromosome"/>
</dbReference>
<dbReference type="GO" id="GO:0005524">
    <property type="term" value="F:ATP binding"/>
    <property type="evidence" value="ECO:0007669"/>
    <property type="project" value="UniProtKB-KW"/>
</dbReference>
<dbReference type="Gene3D" id="3.40.50.300">
    <property type="entry name" value="P-loop containing nucleotide triphosphate hydrolases"/>
    <property type="match status" value="1"/>
</dbReference>
<dbReference type="InterPro" id="IPR011579">
    <property type="entry name" value="ATPase_dom"/>
</dbReference>
<dbReference type="InterPro" id="IPR027417">
    <property type="entry name" value="P-loop_NTPase"/>
</dbReference>
<dbReference type="PANTHER" id="PTHR34704">
    <property type="entry name" value="ATPASE"/>
    <property type="match status" value="1"/>
</dbReference>
<dbReference type="PANTHER" id="PTHR34704:SF1">
    <property type="entry name" value="ATPASE"/>
    <property type="match status" value="1"/>
</dbReference>
<dbReference type="Pfam" id="PF01637">
    <property type="entry name" value="ATPase_2"/>
    <property type="match status" value="1"/>
</dbReference>
<dbReference type="SUPFAM" id="SSF52540">
    <property type="entry name" value="P-loop containing nucleoside triphosphate hydrolases"/>
    <property type="match status" value="1"/>
</dbReference>